<protein>
    <recommendedName>
        <fullName>Acetolactate synthase small subunit</fullName>
        <ecNumber>2.2.1.6</ecNumber>
    </recommendedName>
    <alternativeName>
        <fullName>Acetohydroxy-acid synthase small subunit</fullName>
        <shortName>AHAS</shortName>
        <shortName>ALS</shortName>
    </alternativeName>
</protein>
<reference key="1">
    <citation type="journal article" date="1992" name="J. Bacteriol.">
        <title>Branched-chain amino acid biosynthesis genes in Lactococcus lactis subsp. lactis.</title>
        <authorList>
            <person name="Godon J.-J."/>
            <person name="Chopin M.-C."/>
            <person name="Ehrlich S.D."/>
        </authorList>
    </citation>
    <scope>NUCLEOTIDE SEQUENCE [GENOMIC DNA]</scope>
    <source>
        <strain>NCDO 2118</strain>
    </source>
</reference>
<reference key="2">
    <citation type="journal article" date="2001" name="Genome Res.">
        <title>The complete genome sequence of the lactic acid bacterium Lactococcus lactis ssp. lactis IL1403.</title>
        <authorList>
            <person name="Bolotin A."/>
            <person name="Wincker P."/>
            <person name="Mauger S."/>
            <person name="Jaillon O."/>
            <person name="Malarme K."/>
            <person name="Weissenbach J."/>
            <person name="Ehrlich S.D."/>
            <person name="Sorokin A."/>
        </authorList>
    </citation>
    <scope>NUCLEOTIDE SEQUENCE [LARGE SCALE GENOMIC DNA]</scope>
    <source>
        <strain>IL1403</strain>
    </source>
</reference>
<dbReference type="EC" id="2.2.1.6"/>
<dbReference type="EMBL" id="U92974">
    <property type="protein sequence ID" value="AAB81920.1"/>
    <property type="molecule type" value="Genomic_DNA"/>
</dbReference>
<dbReference type="EMBL" id="AE005176">
    <property type="protein sequence ID" value="AAK05323.1"/>
    <property type="molecule type" value="Genomic_DNA"/>
</dbReference>
<dbReference type="PIR" id="A86778">
    <property type="entry name" value="A86778"/>
</dbReference>
<dbReference type="PIR" id="S35139">
    <property type="entry name" value="S35139"/>
</dbReference>
<dbReference type="RefSeq" id="NP_267381.1">
    <property type="nucleotide sequence ID" value="NC_002662.1"/>
</dbReference>
<dbReference type="RefSeq" id="WP_010905839.1">
    <property type="nucleotide sequence ID" value="NC_002662.1"/>
</dbReference>
<dbReference type="SMR" id="Q02140"/>
<dbReference type="PaxDb" id="272623-L0079"/>
<dbReference type="EnsemblBacteria" id="AAK05323">
    <property type="protein sequence ID" value="AAK05323"/>
    <property type="gene ID" value="L0079"/>
</dbReference>
<dbReference type="GeneID" id="89633338"/>
<dbReference type="KEGG" id="lla:L0079"/>
<dbReference type="PATRIC" id="fig|272623.7.peg.1324"/>
<dbReference type="eggNOG" id="COG0440">
    <property type="taxonomic scope" value="Bacteria"/>
</dbReference>
<dbReference type="HOGENOM" id="CLU_055003_4_0_9"/>
<dbReference type="OrthoDB" id="9787365at2"/>
<dbReference type="UniPathway" id="UPA00047">
    <property type="reaction ID" value="UER00055"/>
</dbReference>
<dbReference type="UniPathway" id="UPA00049">
    <property type="reaction ID" value="UER00059"/>
</dbReference>
<dbReference type="Proteomes" id="UP000002196">
    <property type="component" value="Chromosome"/>
</dbReference>
<dbReference type="GO" id="GO:0005829">
    <property type="term" value="C:cytosol"/>
    <property type="evidence" value="ECO:0007669"/>
    <property type="project" value="TreeGrafter"/>
</dbReference>
<dbReference type="GO" id="GO:0003984">
    <property type="term" value="F:acetolactate synthase activity"/>
    <property type="evidence" value="ECO:0007669"/>
    <property type="project" value="UniProtKB-EC"/>
</dbReference>
<dbReference type="GO" id="GO:1990610">
    <property type="term" value="F:acetolactate synthase regulator activity"/>
    <property type="evidence" value="ECO:0007669"/>
    <property type="project" value="InterPro"/>
</dbReference>
<dbReference type="GO" id="GO:0009097">
    <property type="term" value="P:isoleucine biosynthetic process"/>
    <property type="evidence" value="ECO:0007669"/>
    <property type="project" value="UniProtKB-UniPathway"/>
</dbReference>
<dbReference type="GO" id="GO:0009099">
    <property type="term" value="P:L-valine biosynthetic process"/>
    <property type="evidence" value="ECO:0007669"/>
    <property type="project" value="UniProtKB-UniPathway"/>
</dbReference>
<dbReference type="CDD" id="cd04878">
    <property type="entry name" value="ACT_AHAS"/>
    <property type="match status" value="1"/>
</dbReference>
<dbReference type="FunFam" id="3.30.70.1150:FF:000001">
    <property type="entry name" value="Acetolactate synthase small subunit"/>
    <property type="match status" value="1"/>
</dbReference>
<dbReference type="Gene3D" id="3.30.70.260">
    <property type="match status" value="1"/>
</dbReference>
<dbReference type="Gene3D" id="3.30.70.1150">
    <property type="entry name" value="ACT-like. Chain A, domain 2"/>
    <property type="match status" value="1"/>
</dbReference>
<dbReference type="InterPro" id="IPR004789">
    <property type="entry name" value="Acetalactate_synth_ssu"/>
</dbReference>
<dbReference type="InterPro" id="IPR027271">
    <property type="entry name" value="Acetolactate_synth/TF_NikR_C"/>
</dbReference>
<dbReference type="InterPro" id="IPR019455">
    <property type="entry name" value="Acetolactate_synth_ssu_C"/>
</dbReference>
<dbReference type="InterPro" id="IPR045865">
    <property type="entry name" value="ACT-like_dom_sf"/>
</dbReference>
<dbReference type="InterPro" id="IPR002912">
    <property type="entry name" value="ACT_dom"/>
</dbReference>
<dbReference type="InterPro" id="IPR039557">
    <property type="entry name" value="AHAS_ACT"/>
</dbReference>
<dbReference type="InterPro" id="IPR054480">
    <property type="entry name" value="AHAS_small-like_ACT"/>
</dbReference>
<dbReference type="NCBIfam" id="TIGR00119">
    <property type="entry name" value="acolac_sm"/>
    <property type="match status" value="1"/>
</dbReference>
<dbReference type="NCBIfam" id="NF008864">
    <property type="entry name" value="PRK11895.1"/>
    <property type="match status" value="1"/>
</dbReference>
<dbReference type="PANTHER" id="PTHR30239">
    <property type="entry name" value="ACETOLACTATE SYNTHASE SMALL SUBUNIT"/>
    <property type="match status" value="1"/>
</dbReference>
<dbReference type="PANTHER" id="PTHR30239:SF0">
    <property type="entry name" value="ACETOLACTATE SYNTHASE SMALL SUBUNIT 1, CHLOROPLASTIC"/>
    <property type="match status" value="1"/>
</dbReference>
<dbReference type="Pfam" id="PF22629">
    <property type="entry name" value="ACT_AHAS_ss"/>
    <property type="match status" value="1"/>
</dbReference>
<dbReference type="Pfam" id="PF10369">
    <property type="entry name" value="ALS_ss_C"/>
    <property type="match status" value="1"/>
</dbReference>
<dbReference type="SUPFAM" id="SSF55021">
    <property type="entry name" value="ACT-like"/>
    <property type="match status" value="2"/>
</dbReference>
<dbReference type="PROSITE" id="PS51671">
    <property type="entry name" value="ACT"/>
    <property type="match status" value="1"/>
</dbReference>
<proteinExistence type="inferred from homology"/>
<gene>
    <name type="primary">ilvH</name>
    <name type="synonym">ilvN</name>
    <name type="ordered locus">LL1225</name>
    <name type="ORF">L0079</name>
</gene>
<name>ILVH_LACLA</name>
<feature type="chain" id="PRO_0000151413" description="Acetolactate synthase small subunit">
    <location>
        <begin position="1"/>
        <end position="158"/>
    </location>
</feature>
<feature type="domain" description="ACT" evidence="2">
    <location>
        <begin position="4"/>
        <end position="79"/>
    </location>
</feature>
<feature type="sequence conflict" description="In Ref. 1; AAB81920." evidence="3" ref="1">
    <original>L</original>
    <variation>F</variation>
    <location>
        <position position="80"/>
    </location>
</feature>
<feature type="sequence conflict" description="In Ref. 1; AAB81920." evidence="3" ref="1">
    <original>D</original>
    <variation>E</variation>
    <location>
        <position position="137"/>
    </location>
</feature>
<evidence type="ECO:0000250" key="1"/>
<evidence type="ECO:0000255" key="2">
    <source>
        <dbReference type="PROSITE-ProRule" id="PRU01007"/>
    </source>
</evidence>
<evidence type="ECO:0000305" key="3"/>
<sequence>MRRMIIAKLHNVTGIMNRFTAVLNRRQVNILSITAGVTESQDLTHTTFVIEVDHLDEVEQIIKQLNRLIDVIEVADITDLPHVEREVVLIKVSAPPTIRAEIFTMIEPFRVNVVDVNLENVTIQLTGDSAKIEALIDVVSPYGILNMARTGSAGFERG</sequence>
<comment type="catalytic activity">
    <reaction>
        <text>2 pyruvate + H(+) = (2S)-2-acetolactate + CO2</text>
        <dbReference type="Rhea" id="RHEA:25249"/>
        <dbReference type="ChEBI" id="CHEBI:15361"/>
        <dbReference type="ChEBI" id="CHEBI:15378"/>
        <dbReference type="ChEBI" id="CHEBI:16526"/>
        <dbReference type="ChEBI" id="CHEBI:58476"/>
        <dbReference type="EC" id="2.2.1.6"/>
    </reaction>
</comment>
<comment type="pathway">
    <text>Amino-acid biosynthesis; L-isoleucine biosynthesis; L-isoleucine from 2-oxobutanoate: step 1/4.</text>
</comment>
<comment type="pathway">
    <text>Amino-acid biosynthesis; L-valine biosynthesis; L-valine from pyruvate: step 1/4.</text>
</comment>
<comment type="subunit">
    <text evidence="1">Dimer of large and small chains.</text>
</comment>
<comment type="similarity">
    <text evidence="3">Belongs to the acetolactate synthase small subunit family.</text>
</comment>
<keyword id="KW-0028">Amino-acid biosynthesis</keyword>
<keyword id="KW-0100">Branched-chain amino acid biosynthesis</keyword>
<keyword id="KW-1185">Reference proteome</keyword>
<keyword id="KW-0808">Transferase</keyword>
<accession>Q02140</accession>
<accession>Q9CG83</accession>
<organism>
    <name type="scientific">Lactococcus lactis subsp. lactis (strain IL1403)</name>
    <name type="common">Streptococcus lactis</name>
    <dbReference type="NCBI Taxonomy" id="272623"/>
    <lineage>
        <taxon>Bacteria</taxon>
        <taxon>Bacillati</taxon>
        <taxon>Bacillota</taxon>
        <taxon>Bacilli</taxon>
        <taxon>Lactobacillales</taxon>
        <taxon>Streptococcaceae</taxon>
        <taxon>Lactococcus</taxon>
    </lineage>
</organism>